<organism>
    <name type="scientific">Acidianus filamentous virus 2 (isolate Italy/Pozzuoli)</name>
    <name type="common">AFV-2</name>
    <dbReference type="NCBI Taxonomy" id="654910"/>
    <lineage>
        <taxon>Viruses</taxon>
        <taxon>Adnaviria</taxon>
        <taxon>Zilligvirae</taxon>
        <taxon>Taleaviricota</taxon>
        <taxon>Tokiviricetes</taxon>
        <taxon>Ligamenvirales</taxon>
        <taxon>Lipothrixviridae</taxon>
        <taxon>Deltalipothrixvirus</taxon>
        <taxon>Acidianus filamentous virus 2</taxon>
    </lineage>
</organism>
<dbReference type="EMBL" id="AJ854042">
    <property type="protein sequence ID" value="CAH69418.1"/>
    <property type="molecule type" value="Genomic_DNA"/>
</dbReference>
<dbReference type="RefSeq" id="YP_001496956.1">
    <property type="nucleotide sequence ID" value="NC_009884.1"/>
</dbReference>
<dbReference type="KEGG" id="vg:5656060"/>
<dbReference type="Proteomes" id="UP000006364">
    <property type="component" value="Genome"/>
</dbReference>
<name>Y217A_AFV2P</name>
<gene>
    <name type="ORF">ORF217a</name>
</gene>
<protein>
    <recommendedName>
        <fullName>Uncharacterized protein ORF217a</fullName>
    </recommendedName>
</protein>
<evidence type="ECO:0000256" key="1">
    <source>
        <dbReference type="SAM" id="MobiDB-lite"/>
    </source>
</evidence>
<sequence length="217" mass="24876">MTLKKHRGKMSEKSNVNKKFTNSTQNNSNWSNSPSMINPESFINNPNLIVFKNWVDKLQQEFPTCDVVDSKNNSITIKIRYDDVFRSIYKEVKKSVPDSKVSLKPCNDDKKYGMCMVVKSKTIIVGWEEWGFGKPIEISGEGEFTYYIPLENVINAFDSAWRMNNKGKPLHFKFMTRRLTPRDATTKGVSAEALSSPPTVGEIWHYITIEFVTVTTT</sequence>
<keyword id="KW-1185">Reference proteome</keyword>
<feature type="chain" id="PRO_0000384519" description="Uncharacterized protein ORF217a">
    <location>
        <begin position="1"/>
        <end position="217"/>
    </location>
</feature>
<feature type="region of interest" description="Disordered" evidence="1">
    <location>
        <begin position="1"/>
        <end position="32"/>
    </location>
</feature>
<feature type="compositionally biased region" description="Low complexity" evidence="1">
    <location>
        <begin position="22"/>
        <end position="32"/>
    </location>
</feature>
<reference key="1">
    <citation type="journal article" date="2005" name="J. Bacteriol.">
        <title>Structure and genome organization of AFV2, a novel archaeal lipothrixvirus with unusual terminal and core structures.</title>
        <authorList>
            <person name="Haring M."/>
            <person name="Vestergaard G."/>
            <person name="Brugger K."/>
            <person name="Rachel R."/>
            <person name="Garrett R.A."/>
            <person name="Prangishvili D."/>
        </authorList>
    </citation>
    <scope>NUCLEOTIDE SEQUENCE [GENOMIC DNA]</scope>
</reference>
<accession>Q573D8</accession>
<proteinExistence type="predicted"/>
<organismHost>
    <name type="scientific">Acidianus sp. F28</name>
    <dbReference type="NCBI Taxonomy" id="315458"/>
</organismHost>